<evidence type="ECO:0000255" key="1">
    <source>
        <dbReference type="HAMAP-Rule" id="MF_00384"/>
    </source>
</evidence>
<keyword id="KW-0028">Amino-acid biosynthesis</keyword>
<keyword id="KW-0067">ATP-binding</keyword>
<keyword id="KW-0963">Cytoplasm</keyword>
<keyword id="KW-0418">Kinase</keyword>
<keyword id="KW-0547">Nucleotide-binding</keyword>
<keyword id="KW-0791">Threonine biosynthesis</keyword>
<keyword id="KW-0808">Transferase</keyword>
<accession>Q63CI8</accession>
<gene>
    <name evidence="1" type="primary">thrB</name>
    <name type="ordered locus">BCE33L1784</name>
</gene>
<protein>
    <recommendedName>
        <fullName evidence="1">Homoserine kinase</fullName>
        <shortName evidence="1">HK</shortName>
        <shortName evidence="1">HSK</shortName>
        <ecNumber evidence="1">2.7.1.39</ecNumber>
    </recommendedName>
</protein>
<sequence length="297" mass="32137">MIPLSIRVPASTANVGPGFDSVGIALSLYLHVVVKEKSDKWQVIHSFEDSIPTDDKNLIVSTACKVCPSLSPHIIEVTSNIPLTRGLGSSASAIVAGIELANQLGKLNLTTDQKVQIATNFEGHPDNVAASILGGTVIGALDGKNVSVVRIESKELGVISLIPNEELNTDESRSVLPDVFPFHEAVKASAISNVLVAALCQKKWEVVGEMMERDHFHEPYRLELIPLLPSIRKCAKEFGAYGTALSGAGPSIFILTPYEKRQEIAEQLARVFTSMKVCELEIDHRGITVNKKEHIGL</sequence>
<dbReference type="EC" id="2.7.1.39" evidence="1"/>
<dbReference type="EMBL" id="CP000001">
    <property type="protein sequence ID" value="AAU18469.1"/>
    <property type="molecule type" value="Genomic_DNA"/>
</dbReference>
<dbReference type="RefSeq" id="WP_000612673.1">
    <property type="nucleotide sequence ID" value="NC_006274.1"/>
</dbReference>
<dbReference type="SMR" id="Q63CI8"/>
<dbReference type="KEGG" id="bcz:BCE33L1784"/>
<dbReference type="PATRIC" id="fig|288681.22.peg.3750"/>
<dbReference type="UniPathway" id="UPA00050">
    <property type="reaction ID" value="UER00064"/>
</dbReference>
<dbReference type="Proteomes" id="UP000002612">
    <property type="component" value="Chromosome"/>
</dbReference>
<dbReference type="GO" id="GO:0005737">
    <property type="term" value="C:cytoplasm"/>
    <property type="evidence" value="ECO:0007669"/>
    <property type="project" value="UniProtKB-SubCell"/>
</dbReference>
<dbReference type="GO" id="GO:0005524">
    <property type="term" value="F:ATP binding"/>
    <property type="evidence" value="ECO:0007669"/>
    <property type="project" value="UniProtKB-UniRule"/>
</dbReference>
<dbReference type="GO" id="GO:0004413">
    <property type="term" value="F:homoserine kinase activity"/>
    <property type="evidence" value="ECO:0007669"/>
    <property type="project" value="UniProtKB-UniRule"/>
</dbReference>
<dbReference type="GO" id="GO:0009088">
    <property type="term" value="P:threonine biosynthetic process"/>
    <property type="evidence" value="ECO:0007669"/>
    <property type="project" value="UniProtKB-UniRule"/>
</dbReference>
<dbReference type="Gene3D" id="3.30.230.10">
    <property type="match status" value="1"/>
</dbReference>
<dbReference type="Gene3D" id="3.30.70.890">
    <property type="entry name" value="GHMP kinase, C-terminal domain"/>
    <property type="match status" value="1"/>
</dbReference>
<dbReference type="HAMAP" id="MF_00384">
    <property type="entry name" value="Homoser_kinase"/>
    <property type="match status" value="1"/>
</dbReference>
<dbReference type="InterPro" id="IPR013750">
    <property type="entry name" value="GHMP_kinase_C_dom"/>
</dbReference>
<dbReference type="InterPro" id="IPR036554">
    <property type="entry name" value="GHMP_kinase_C_sf"/>
</dbReference>
<dbReference type="InterPro" id="IPR006204">
    <property type="entry name" value="GHMP_kinase_N_dom"/>
</dbReference>
<dbReference type="InterPro" id="IPR006203">
    <property type="entry name" value="GHMP_knse_ATP-bd_CS"/>
</dbReference>
<dbReference type="InterPro" id="IPR000870">
    <property type="entry name" value="Homoserine_kinase"/>
</dbReference>
<dbReference type="InterPro" id="IPR020568">
    <property type="entry name" value="Ribosomal_Su5_D2-typ_SF"/>
</dbReference>
<dbReference type="InterPro" id="IPR014721">
    <property type="entry name" value="Ribsml_uS5_D2-typ_fold_subgr"/>
</dbReference>
<dbReference type="NCBIfam" id="TIGR00191">
    <property type="entry name" value="thrB"/>
    <property type="match status" value="1"/>
</dbReference>
<dbReference type="PANTHER" id="PTHR20861:SF1">
    <property type="entry name" value="HOMOSERINE KINASE"/>
    <property type="match status" value="1"/>
</dbReference>
<dbReference type="PANTHER" id="PTHR20861">
    <property type="entry name" value="HOMOSERINE/4-DIPHOSPHOCYTIDYL-2-C-METHYL-D-ERYTHRITOL KINASE"/>
    <property type="match status" value="1"/>
</dbReference>
<dbReference type="Pfam" id="PF08544">
    <property type="entry name" value="GHMP_kinases_C"/>
    <property type="match status" value="1"/>
</dbReference>
<dbReference type="Pfam" id="PF00288">
    <property type="entry name" value="GHMP_kinases_N"/>
    <property type="match status" value="1"/>
</dbReference>
<dbReference type="PIRSF" id="PIRSF000676">
    <property type="entry name" value="Homoser_kin"/>
    <property type="match status" value="1"/>
</dbReference>
<dbReference type="PRINTS" id="PR00958">
    <property type="entry name" value="HOMSERKINASE"/>
</dbReference>
<dbReference type="SUPFAM" id="SSF55060">
    <property type="entry name" value="GHMP Kinase, C-terminal domain"/>
    <property type="match status" value="1"/>
</dbReference>
<dbReference type="SUPFAM" id="SSF54211">
    <property type="entry name" value="Ribosomal protein S5 domain 2-like"/>
    <property type="match status" value="1"/>
</dbReference>
<dbReference type="PROSITE" id="PS00627">
    <property type="entry name" value="GHMP_KINASES_ATP"/>
    <property type="match status" value="1"/>
</dbReference>
<name>KHSE_BACCZ</name>
<comment type="function">
    <text evidence="1">Catalyzes the ATP-dependent phosphorylation of L-homoserine to L-homoserine phosphate.</text>
</comment>
<comment type="catalytic activity">
    <reaction evidence="1">
        <text>L-homoserine + ATP = O-phospho-L-homoserine + ADP + H(+)</text>
        <dbReference type="Rhea" id="RHEA:13985"/>
        <dbReference type="ChEBI" id="CHEBI:15378"/>
        <dbReference type="ChEBI" id="CHEBI:30616"/>
        <dbReference type="ChEBI" id="CHEBI:57476"/>
        <dbReference type="ChEBI" id="CHEBI:57590"/>
        <dbReference type="ChEBI" id="CHEBI:456216"/>
        <dbReference type="EC" id="2.7.1.39"/>
    </reaction>
</comment>
<comment type="pathway">
    <text evidence="1">Amino-acid biosynthesis; L-threonine biosynthesis; L-threonine from L-aspartate: step 4/5.</text>
</comment>
<comment type="subcellular location">
    <subcellularLocation>
        <location evidence="1">Cytoplasm</location>
    </subcellularLocation>
</comment>
<comment type="similarity">
    <text evidence="1">Belongs to the GHMP kinase family. Homoserine kinase subfamily.</text>
</comment>
<reference key="1">
    <citation type="journal article" date="2006" name="J. Bacteriol.">
        <title>Pathogenomic sequence analysis of Bacillus cereus and Bacillus thuringiensis isolates closely related to Bacillus anthracis.</title>
        <authorList>
            <person name="Han C.S."/>
            <person name="Xie G."/>
            <person name="Challacombe J.F."/>
            <person name="Altherr M.R."/>
            <person name="Bhotika S.S."/>
            <person name="Bruce D."/>
            <person name="Campbell C.S."/>
            <person name="Campbell M.L."/>
            <person name="Chen J."/>
            <person name="Chertkov O."/>
            <person name="Cleland C."/>
            <person name="Dimitrijevic M."/>
            <person name="Doggett N.A."/>
            <person name="Fawcett J.J."/>
            <person name="Glavina T."/>
            <person name="Goodwin L.A."/>
            <person name="Hill K.K."/>
            <person name="Hitchcock P."/>
            <person name="Jackson P.J."/>
            <person name="Keim P."/>
            <person name="Kewalramani A.R."/>
            <person name="Longmire J."/>
            <person name="Lucas S."/>
            <person name="Malfatti S."/>
            <person name="McMurry K."/>
            <person name="Meincke L.J."/>
            <person name="Misra M."/>
            <person name="Moseman B.L."/>
            <person name="Mundt M."/>
            <person name="Munk A.C."/>
            <person name="Okinaka R.T."/>
            <person name="Parson-Quintana B."/>
            <person name="Reilly L.P."/>
            <person name="Richardson P."/>
            <person name="Robinson D.L."/>
            <person name="Rubin E."/>
            <person name="Saunders E."/>
            <person name="Tapia R."/>
            <person name="Tesmer J.G."/>
            <person name="Thayer N."/>
            <person name="Thompson L.S."/>
            <person name="Tice H."/>
            <person name="Ticknor L.O."/>
            <person name="Wills P.L."/>
            <person name="Brettin T.S."/>
            <person name="Gilna P."/>
        </authorList>
    </citation>
    <scope>NUCLEOTIDE SEQUENCE [LARGE SCALE GENOMIC DNA]</scope>
    <source>
        <strain>ZK / E33L</strain>
    </source>
</reference>
<feature type="chain" id="PRO_0000156550" description="Homoserine kinase">
    <location>
        <begin position="1"/>
        <end position="297"/>
    </location>
</feature>
<feature type="binding site" evidence="1">
    <location>
        <begin position="82"/>
        <end position="92"/>
    </location>
    <ligand>
        <name>ATP</name>
        <dbReference type="ChEBI" id="CHEBI:30616"/>
    </ligand>
</feature>
<organism>
    <name type="scientific">Bacillus cereus (strain ZK / E33L)</name>
    <dbReference type="NCBI Taxonomy" id="288681"/>
    <lineage>
        <taxon>Bacteria</taxon>
        <taxon>Bacillati</taxon>
        <taxon>Bacillota</taxon>
        <taxon>Bacilli</taxon>
        <taxon>Bacillales</taxon>
        <taxon>Bacillaceae</taxon>
        <taxon>Bacillus</taxon>
        <taxon>Bacillus cereus group</taxon>
    </lineage>
</organism>
<proteinExistence type="inferred from homology"/>